<protein>
    <recommendedName>
        <fullName>Porphobilinogen deaminase</fullName>
        <shortName>PBG</shortName>
        <ecNumber evidence="4">2.5.1.61</ecNumber>
    </recommendedName>
    <alternativeName>
        <fullName>Hydroxymethylbilane synthase</fullName>
        <shortName>HMBS</shortName>
    </alternativeName>
    <alternativeName>
        <fullName>Pre-uroporphyrinogen synthase</fullName>
    </alternativeName>
</protein>
<dbReference type="EC" id="2.5.1.61" evidence="4"/>
<dbReference type="EMBL" id="Z11745">
    <property type="protein sequence ID" value="CAA77804.1"/>
    <property type="molecule type" value="Genomic_DNA"/>
</dbReference>
<dbReference type="EMBL" id="X99000">
    <property type="protein sequence ID" value="CAA67486.1"/>
    <property type="molecule type" value="Genomic_DNA"/>
</dbReference>
<dbReference type="EMBL" id="Z74253">
    <property type="protein sequence ID" value="CAA98783.1"/>
    <property type="molecule type" value="Genomic_DNA"/>
</dbReference>
<dbReference type="EMBL" id="AY899249">
    <property type="protein sequence ID" value="AAX83934.1"/>
    <property type="molecule type" value="mRNA"/>
</dbReference>
<dbReference type="EMBL" id="BK006938">
    <property type="protein sequence ID" value="DAA11659.1"/>
    <property type="molecule type" value="Genomic_DNA"/>
</dbReference>
<dbReference type="PIR" id="S25071">
    <property type="entry name" value="S25071"/>
</dbReference>
<dbReference type="RefSeq" id="NP_010076.1">
    <property type="nucleotide sequence ID" value="NM_001180265.1"/>
</dbReference>
<dbReference type="SMR" id="P28789"/>
<dbReference type="BioGRID" id="31841">
    <property type="interactions" value="25"/>
</dbReference>
<dbReference type="FunCoup" id="P28789">
    <property type="interactions" value="797"/>
</dbReference>
<dbReference type="IntAct" id="P28789">
    <property type="interactions" value="2"/>
</dbReference>
<dbReference type="STRING" id="4932.YDL205C"/>
<dbReference type="iPTMnet" id="P28789"/>
<dbReference type="PaxDb" id="4932-YDL205C"/>
<dbReference type="PeptideAtlas" id="P28789"/>
<dbReference type="EnsemblFungi" id="YDL205C_mRNA">
    <property type="protein sequence ID" value="YDL205C"/>
    <property type="gene ID" value="YDL205C"/>
</dbReference>
<dbReference type="GeneID" id="851322"/>
<dbReference type="KEGG" id="sce:YDL205C"/>
<dbReference type="AGR" id="SGD:S000002364"/>
<dbReference type="SGD" id="S000002364">
    <property type="gene designation" value="HEM3"/>
</dbReference>
<dbReference type="VEuPathDB" id="FungiDB:YDL205C"/>
<dbReference type="eggNOG" id="KOG2892">
    <property type="taxonomic scope" value="Eukaryota"/>
</dbReference>
<dbReference type="GeneTree" id="ENSGT00390000009083"/>
<dbReference type="HOGENOM" id="CLU_019704_0_2_1"/>
<dbReference type="InParanoid" id="P28789"/>
<dbReference type="OMA" id="NAHEWAG"/>
<dbReference type="OrthoDB" id="564646at2759"/>
<dbReference type="BioCyc" id="YEAST:YDL205C-MONOMER"/>
<dbReference type="Reactome" id="R-SCE-189451">
    <property type="pathway name" value="Heme biosynthesis"/>
</dbReference>
<dbReference type="UniPathway" id="UPA00251">
    <property type="reaction ID" value="UER00319"/>
</dbReference>
<dbReference type="BioGRID-ORCS" id="851322">
    <property type="hits" value="8 hits in 10 CRISPR screens"/>
</dbReference>
<dbReference type="PRO" id="PR:P28789"/>
<dbReference type="Proteomes" id="UP000002311">
    <property type="component" value="Chromosome IV"/>
</dbReference>
<dbReference type="RNAct" id="P28789">
    <property type="molecule type" value="protein"/>
</dbReference>
<dbReference type="GO" id="GO:0005737">
    <property type="term" value="C:cytoplasm"/>
    <property type="evidence" value="ECO:0007005"/>
    <property type="project" value="SGD"/>
</dbReference>
<dbReference type="GO" id="GO:0005634">
    <property type="term" value="C:nucleus"/>
    <property type="evidence" value="ECO:0007005"/>
    <property type="project" value="SGD"/>
</dbReference>
<dbReference type="GO" id="GO:0004418">
    <property type="term" value="F:hydroxymethylbilane synthase activity"/>
    <property type="evidence" value="ECO:0000315"/>
    <property type="project" value="SGD"/>
</dbReference>
<dbReference type="GO" id="GO:0006783">
    <property type="term" value="P:heme biosynthetic process"/>
    <property type="evidence" value="ECO:0000315"/>
    <property type="project" value="SGD"/>
</dbReference>
<dbReference type="GO" id="GO:0006782">
    <property type="term" value="P:protoporphyrinogen IX biosynthetic process"/>
    <property type="evidence" value="ECO:0007669"/>
    <property type="project" value="UniProtKB-UniPathway"/>
</dbReference>
<dbReference type="CDD" id="cd13645">
    <property type="entry name" value="PBP2_HuPBGD_like"/>
    <property type="match status" value="1"/>
</dbReference>
<dbReference type="FunFam" id="3.30.160.40:FF:000002">
    <property type="entry name" value="Porphobilinogen deaminase"/>
    <property type="match status" value="1"/>
</dbReference>
<dbReference type="FunFam" id="3.40.190.10:FF:000005">
    <property type="entry name" value="Porphobilinogen deaminase"/>
    <property type="match status" value="1"/>
</dbReference>
<dbReference type="Gene3D" id="3.40.190.10">
    <property type="entry name" value="Periplasmic binding protein-like II"/>
    <property type="match status" value="2"/>
</dbReference>
<dbReference type="Gene3D" id="3.30.160.40">
    <property type="entry name" value="Porphobilinogen deaminase, C-terminal domain"/>
    <property type="match status" value="1"/>
</dbReference>
<dbReference type="InterPro" id="IPR000860">
    <property type="entry name" value="HemC"/>
</dbReference>
<dbReference type="InterPro" id="IPR022419">
    <property type="entry name" value="Porphobilin_deaminase_cofac_BS"/>
</dbReference>
<dbReference type="InterPro" id="IPR022417">
    <property type="entry name" value="Porphobilin_deaminase_N"/>
</dbReference>
<dbReference type="InterPro" id="IPR022418">
    <property type="entry name" value="Porphobilinogen_deaminase_C"/>
</dbReference>
<dbReference type="InterPro" id="IPR036803">
    <property type="entry name" value="Porphobilinogen_deaminase_C_sf"/>
</dbReference>
<dbReference type="NCBIfam" id="TIGR00212">
    <property type="entry name" value="hemC"/>
    <property type="match status" value="1"/>
</dbReference>
<dbReference type="PANTHER" id="PTHR11557">
    <property type="entry name" value="PORPHOBILINOGEN DEAMINASE"/>
    <property type="match status" value="1"/>
</dbReference>
<dbReference type="PANTHER" id="PTHR11557:SF0">
    <property type="entry name" value="PORPHOBILINOGEN DEAMINASE"/>
    <property type="match status" value="1"/>
</dbReference>
<dbReference type="Pfam" id="PF01379">
    <property type="entry name" value="Porphobil_deam"/>
    <property type="match status" value="1"/>
</dbReference>
<dbReference type="Pfam" id="PF03900">
    <property type="entry name" value="Porphobil_deamC"/>
    <property type="match status" value="1"/>
</dbReference>
<dbReference type="PIRSF" id="PIRSF001438">
    <property type="entry name" value="4pyrrol_synth_OHMeBilane_synth"/>
    <property type="match status" value="1"/>
</dbReference>
<dbReference type="PRINTS" id="PR00151">
    <property type="entry name" value="PORPHBDMNASE"/>
</dbReference>
<dbReference type="SUPFAM" id="SSF53850">
    <property type="entry name" value="Periplasmic binding protein-like II"/>
    <property type="match status" value="1"/>
</dbReference>
<dbReference type="SUPFAM" id="SSF54782">
    <property type="entry name" value="Porphobilinogen deaminase (hydroxymethylbilane synthase), C-terminal domain"/>
    <property type="match status" value="1"/>
</dbReference>
<dbReference type="PROSITE" id="PS00533">
    <property type="entry name" value="PORPHOBILINOGEN_DEAM"/>
    <property type="match status" value="1"/>
</dbReference>
<reference key="1">
    <citation type="journal article" date="1992" name="Mol. Gen. Genet.">
        <title>Structure and regulation of yeast HEM3, the gene for porphobilinogen deaminase.</title>
        <authorList>
            <person name="Keng T."/>
            <person name="Richard C."/>
            <person name="Larocque R."/>
        </authorList>
    </citation>
    <scope>NUCLEOTIDE SEQUENCE [GENOMIC DNA]</scope>
    <scope>FUNCTION</scope>
    <scope>CATALYTIC ACTIVITY</scope>
</reference>
<reference key="2">
    <citation type="journal article" date="1997" name="Nature">
        <title>The nucleotide sequence of Saccharomyces cerevisiae chromosome IV.</title>
        <authorList>
            <person name="Jacq C."/>
            <person name="Alt-Moerbe J."/>
            <person name="Andre B."/>
            <person name="Arnold W."/>
            <person name="Bahr A."/>
            <person name="Ballesta J.P.G."/>
            <person name="Bargues M."/>
            <person name="Baron L."/>
            <person name="Becker A."/>
            <person name="Biteau N."/>
            <person name="Bloecker H."/>
            <person name="Blugeon C."/>
            <person name="Boskovic J."/>
            <person name="Brandt P."/>
            <person name="Brueckner M."/>
            <person name="Buitrago M.J."/>
            <person name="Coster F."/>
            <person name="Delaveau T."/>
            <person name="del Rey F."/>
            <person name="Dujon B."/>
            <person name="Eide L.G."/>
            <person name="Garcia-Cantalejo J.M."/>
            <person name="Goffeau A."/>
            <person name="Gomez-Peris A."/>
            <person name="Granotier C."/>
            <person name="Hanemann V."/>
            <person name="Hankeln T."/>
            <person name="Hoheisel J.D."/>
            <person name="Jaeger W."/>
            <person name="Jimenez A."/>
            <person name="Jonniaux J.-L."/>
            <person name="Kraemer C."/>
            <person name="Kuester H."/>
            <person name="Laamanen P."/>
            <person name="Legros Y."/>
            <person name="Louis E.J."/>
            <person name="Moeller-Rieker S."/>
            <person name="Monnet A."/>
            <person name="Moro M."/>
            <person name="Mueller-Auer S."/>
            <person name="Nussbaumer B."/>
            <person name="Paricio N."/>
            <person name="Paulin L."/>
            <person name="Perea J."/>
            <person name="Perez-Alonso M."/>
            <person name="Perez-Ortin J.E."/>
            <person name="Pohl T.M."/>
            <person name="Prydz H."/>
            <person name="Purnelle B."/>
            <person name="Rasmussen S.W."/>
            <person name="Remacha M.A."/>
            <person name="Revuelta J.L."/>
            <person name="Rieger M."/>
            <person name="Salom D."/>
            <person name="Saluz H.P."/>
            <person name="Saiz J.E."/>
            <person name="Saren A.-M."/>
            <person name="Schaefer M."/>
            <person name="Scharfe M."/>
            <person name="Schmidt E.R."/>
            <person name="Schneider C."/>
            <person name="Scholler P."/>
            <person name="Schwarz S."/>
            <person name="Soler-Mira A."/>
            <person name="Urrestarazu L.A."/>
            <person name="Verhasselt P."/>
            <person name="Vissers S."/>
            <person name="Voet M."/>
            <person name="Volckaert G."/>
            <person name="Wagner G."/>
            <person name="Wambutt R."/>
            <person name="Wedler E."/>
            <person name="Wedler H."/>
            <person name="Woelfl S."/>
            <person name="Harris D.E."/>
            <person name="Bowman S."/>
            <person name="Brown D."/>
            <person name="Churcher C.M."/>
            <person name="Connor R."/>
            <person name="Dedman K."/>
            <person name="Gentles S."/>
            <person name="Hamlin N."/>
            <person name="Hunt S."/>
            <person name="Jones L."/>
            <person name="McDonald S."/>
            <person name="Murphy L.D."/>
            <person name="Niblett D."/>
            <person name="Odell C."/>
            <person name="Oliver K."/>
            <person name="Rajandream M.A."/>
            <person name="Richards C."/>
            <person name="Shore L."/>
            <person name="Walsh S.V."/>
            <person name="Barrell B.G."/>
            <person name="Dietrich F.S."/>
            <person name="Mulligan J.T."/>
            <person name="Allen E."/>
            <person name="Araujo R."/>
            <person name="Aviles E."/>
            <person name="Berno A."/>
            <person name="Carpenter J."/>
            <person name="Chen E."/>
            <person name="Cherry J.M."/>
            <person name="Chung E."/>
            <person name="Duncan M."/>
            <person name="Hunicke-Smith S."/>
            <person name="Hyman R.W."/>
            <person name="Komp C."/>
            <person name="Lashkari D."/>
            <person name="Lew H."/>
            <person name="Lin D."/>
            <person name="Mosedale D."/>
            <person name="Nakahara K."/>
            <person name="Namath A."/>
            <person name="Oefner P."/>
            <person name="Oh C."/>
            <person name="Petel F.X."/>
            <person name="Roberts D."/>
            <person name="Schramm S."/>
            <person name="Schroeder M."/>
            <person name="Shogren T."/>
            <person name="Shroff N."/>
            <person name="Winant A."/>
            <person name="Yelton M.A."/>
            <person name="Botstein D."/>
            <person name="Davis R.W."/>
            <person name="Johnston M."/>
            <person name="Andrews S."/>
            <person name="Brinkman R."/>
            <person name="Cooper J."/>
            <person name="Ding H."/>
            <person name="Du Z."/>
            <person name="Favello A."/>
            <person name="Fulton L."/>
            <person name="Gattung S."/>
            <person name="Greco T."/>
            <person name="Hallsworth K."/>
            <person name="Hawkins J."/>
            <person name="Hillier L.W."/>
            <person name="Jier M."/>
            <person name="Johnson D."/>
            <person name="Johnston L."/>
            <person name="Kirsten J."/>
            <person name="Kucaba T."/>
            <person name="Langston Y."/>
            <person name="Latreille P."/>
            <person name="Le T."/>
            <person name="Mardis E."/>
            <person name="Menezes S."/>
            <person name="Miller N."/>
            <person name="Nhan M."/>
            <person name="Pauley A."/>
            <person name="Peluso D."/>
            <person name="Rifkin L."/>
            <person name="Riles L."/>
            <person name="Taich A."/>
            <person name="Trevaskis E."/>
            <person name="Vignati D."/>
            <person name="Wilcox L."/>
            <person name="Wohldman P."/>
            <person name="Vaudin M."/>
            <person name="Wilson R."/>
            <person name="Waterston R."/>
            <person name="Albermann K."/>
            <person name="Hani J."/>
            <person name="Heumann K."/>
            <person name="Kleine K."/>
            <person name="Mewes H.-W."/>
            <person name="Zollner A."/>
            <person name="Zaccaria P."/>
        </authorList>
    </citation>
    <scope>NUCLEOTIDE SEQUENCE [LARGE SCALE GENOMIC DNA]</scope>
    <source>
        <strain>ATCC 204508 / S288c</strain>
    </source>
</reference>
<reference key="3">
    <citation type="journal article" date="2014" name="G3 (Bethesda)">
        <title>The reference genome sequence of Saccharomyces cerevisiae: Then and now.</title>
        <authorList>
            <person name="Engel S.R."/>
            <person name="Dietrich F.S."/>
            <person name="Fisk D.G."/>
            <person name="Binkley G."/>
            <person name="Balakrishnan R."/>
            <person name="Costanzo M.C."/>
            <person name="Dwight S.S."/>
            <person name="Hitz B.C."/>
            <person name="Karra K."/>
            <person name="Nash R.S."/>
            <person name="Weng S."/>
            <person name="Wong E.D."/>
            <person name="Lloyd P."/>
            <person name="Skrzypek M.S."/>
            <person name="Miyasato S.R."/>
            <person name="Simison M."/>
            <person name="Cherry J.M."/>
        </authorList>
    </citation>
    <scope>GENOME REANNOTATION</scope>
    <source>
        <strain>ATCC 204508 / S288c</strain>
    </source>
</reference>
<reference key="4">
    <citation type="journal article" date="2005" name="Nucleic Acids Res.">
        <title>Mapping of transcription start sites in Saccharomyces cerevisiae using 5' SAGE.</title>
        <authorList>
            <person name="Zhang Z."/>
            <person name="Dietrich F.S."/>
        </authorList>
    </citation>
    <scope>NUCLEOTIDE SEQUENCE [MRNA] OF 1-97</scope>
    <source>
        <strain>ATCC 208353 / W303-1A</strain>
    </source>
</reference>
<reference key="5">
    <citation type="journal article" date="2003" name="Nature">
        <title>Global analysis of protein expression in yeast.</title>
        <authorList>
            <person name="Ghaemmaghami S."/>
            <person name="Huh W.-K."/>
            <person name="Bower K."/>
            <person name="Howson R.W."/>
            <person name="Belle A."/>
            <person name="Dephoure N."/>
            <person name="O'Shea E.K."/>
            <person name="Weissman J.S."/>
        </authorList>
    </citation>
    <scope>LEVEL OF PROTEIN EXPRESSION [LARGE SCALE ANALYSIS]</scope>
</reference>
<reference key="6">
    <citation type="journal article" date="2012" name="Proc. Natl. Acad. Sci. U.S.A.">
        <title>N-terminal acetylome analyses and functional insights of the N-terminal acetyltransferase NatB.</title>
        <authorList>
            <person name="Van Damme P."/>
            <person name="Lasa M."/>
            <person name="Polevoda B."/>
            <person name="Gazquez C."/>
            <person name="Elosegui-Artola A."/>
            <person name="Kim D.S."/>
            <person name="De Juan-Pardo E."/>
            <person name="Demeyer K."/>
            <person name="Hole K."/>
            <person name="Larrea E."/>
            <person name="Timmerman E."/>
            <person name="Prieto J."/>
            <person name="Arnesen T."/>
            <person name="Sherman F."/>
            <person name="Gevaert K."/>
            <person name="Aldabe R."/>
        </authorList>
    </citation>
    <scope>IDENTIFICATION BY MASS SPECTROMETRY [LARGE SCALE ANALYSIS]</scope>
</reference>
<feature type="chain" id="PRO_0000143045" description="Porphobilinogen deaminase">
    <location>
        <begin position="1"/>
        <end position="327"/>
    </location>
</feature>
<feature type="modified residue" description="S-(dipyrrolylmethanemethyl)cysteine" evidence="1">
    <location>
        <position position="251"/>
    </location>
</feature>
<name>HEM3_YEAST</name>
<sequence>MGPETLHIGGRKSKLAVIQSNHVLKLIEEKYPDYDCKVFTLQTLGDQIQFKPLYSFGGKALWTKELEDHLYHDDPSKKLDLIVHSLKDMPTLLPEGFELGGITKRVDPTDCLVMPFYSAYKSLDDLPDGGIVGTSSVRRSAQLKRKYPHLKFESVRGNIQTRLQKLDDPKSPYQCIILASAGLMRMGLENRITQRFHSDTMYHAVGQGALGIEIRKGDTKMMKILDEICDLNATICCLSERALMRTLEGGCSVPIGVESKYNEETKKLLLKAIVVDVEGTEAVEDEIEMLIENVKEDSMACGKILAERMIADGAKKILDEINLDRIK</sequence>
<gene>
    <name type="primary">HEM3</name>
    <name type="ordered locus">YDL205C</name>
    <name type="ORF">D1057</name>
</gene>
<comment type="function">
    <text evidence="4">Catalyzes the tetrapolymerization of the monopyrrole porphobilinogen (PBG) into the hydroxymethylbilane pre-uroporphyrinogen in several discrete steps.</text>
</comment>
<comment type="catalytic activity">
    <reaction evidence="4">
        <text>4 porphobilinogen + H2O = hydroxymethylbilane + 4 NH4(+)</text>
        <dbReference type="Rhea" id="RHEA:13185"/>
        <dbReference type="ChEBI" id="CHEBI:15377"/>
        <dbReference type="ChEBI" id="CHEBI:28938"/>
        <dbReference type="ChEBI" id="CHEBI:57845"/>
        <dbReference type="ChEBI" id="CHEBI:58126"/>
        <dbReference type="EC" id="2.5.1.61"/>
    </reaction>
    <physiologicalReaction direction="left-to-right" evidence="4">
        <dbReference type="Rhea" id="RHEA:13186"/>
    </physiologicalReaction>
</comment>
<comment type="cofactor">
    <cofactor>
        <name>dipyrromethane</name>
        <dbReference type="ChEBI" id="CHEBI:60342"/>
    </cofactor>
    <text evidence="4">Binds 1 dipyrromethane group covalently.</text>
</comment>
<comment type="pathway">
    <text evidence="4">Porphyrin-containing compound metabolism; protoporphyrin-IX biosynthesis; coproporphyrinogen-III from 5-aminolevulinate: step 2/4.</text>
</comment>
<comment type="miscellaneous">
    <text evidence="1">The porphobilinogen subunits are added to the dipyrromethane group.</text>
</comment>
<comment type="miscellaneous">
    <text evidence="2">Present with 8480 molecules/cell in log phase SD medium.</text>
</comment>
<comment type="similarity">
    <text evidence="3">Belongs to the HMBS family.</text>
</comment>
<organism>
    <name type="scientific">Saccharomyces cerevisiae (strain ATCC 204508 / S288c)</name>
    <name type="common">Baker's yeast</name>
    <dbReference type="NCBI Taxonomy" id="559292"/>
    <lineage>
        <taxon>Eukaryota</taxon>
        <taxon>Fungi</taxon>
        <taxon>Dikarya</taxon>
        <taxon>Ascomycota</taxon>
        <taxon>Saccharomycotina</taxon>
        <taxon>Saccharomycetes</taxon>
        <taxon>Saccharomycetales</taxon>
        <taxon>Saccharomycetaceae</taxon>
        <taxon>Saccharomyces</taxon>
    </lineage>
</organism>
<accession>P28789</accession>
<accession>D6VRE9</accession>
<accession>Q2VQW9</accession>
<evidence type="ECO:0000250" key="1"/>
<evidence type="ECO:0000269" key="2">
    <source>
    </source>
</evidence>
<evidence type="ECO:0000305" key="3"/>
<evidence type="ECO:0000305" key="4">
    <source>
    </source>
</evidence>
<keyword id="KW-0350">Heme biosynthesis</keyword>
<keyword id="KW-0627">Porphyrin biosynthesis</keyword>
<keyword id="KW-1185">Reference proteome</keyword>
<keyword id="KW-0808">Transferase</keyword>
<proteinExistence type="evidence at protein level"/>